<sequence>MELSEITRSTLVSTLSRLLRRHKESNPDFFLIRSKMFIGGLSWDTSKKDLTEYLSRFGEVLDCTIKTDPVTGRSRGFGFVLFKDAVSVDKVLETKEHKLDGKLIDPKRAKALQGKEPPKKVFVGGLSPETTEEQIKQYFGGFGEIENIELPMDTKTNERRGFCFVTYTDEEPVQKLLESRFHQIGTGKCEIKAAQPKEVYRQQQQKQQKGGRGGTRGRGRGQGYSNYYDQNYGGYGNNDSYGDQGYGGYDYSGYNYGNYGYNQGYTDYSGQQSTYGKARGGGNHQNNYQPY</sequence>
<name>HNDLB_XENLA</name>
<organism>
    <name type="scientific">Xenopus laevis</name>
    <name type="common">African clawed frog</name>
    <dbReference type="NCBI Taxonomy" id="8355"/>
    <lineage>
        <taxon>Eukaryota</taxon>
        <taxon>Metazoa</taxon>
        <taxon>Chordata</taxon>
        <taxon>Craniata</taxon>
        <taxon>Vertebrata</taxon>
        <taxon>Euteleostomi</taxon>
        <taxon>Amphibia</taxon>
        <taxon>Batrachia</taxon>
        <taxon>Anura</taxon>
        <taxon>Pipoidea</taxon>
        <taxon>Pipidae</taxon>
        <taxon>Xenopodinae</taxon>
        <taxon>Xenopus</taxon>
        <taxon>Xenopus</taxon>
    </lineage>
</organism>
<comment type="function">
    <text evidence="1">Acts as a transcriptional regulator. Binds DNA and RNA (By similarity).</text>
</comment>
<comment type="subcellular location">
    <subcellularLocation>
        <location evidence="2">Nucleus</location>
    </subcellularLocation>
    <subcellularLocation>
        <location evidence="2">Cytoplasm</location>
    </subcellularLocation>
</comment>
<gene>
    <name type="primary">hnrnpdl-b</name>
    <name type="synonym">hnrpdl-b</name>
</gene>
<accession>Q6NU14</accession>
<feature type="chain" id="PRO_0000287244" description="Heterogeneous nuclear ribonucleoprotein D-like-B">
    <location>
        <begin position="1"/>
        <end position="291"/>
    </location>
</feature>
<feature type="domain" description="RRM 1" evidence="3">
    <location>
        <begin position="34"/>
        <end position="116"/>
    </location>
</feature>
<feature type="domain" description="RRM 2" evidence="3">
    <location>
        <begin position="119"/>
        <end position="196"/>
    </location>
</feature>
<feature type="region of interest" description="Disordered" evidence="4">
    <location>
        <begin position="196"/>
        <end position="226"/>
    </location>
</feature>
<feature type="compositionally biased region" description="Gly residues" evidence="4">
    <location>
        <begin position="210"/>
        <end position="222"/>
    </location>
</feature>
<protein>
    <recommendedName>
        <fullName>Heterogeneous nuclear ribonucleoprotein D-like-B</fullName>
        <shortName>hnRNP D-like B</shortName>
        <shortName>hnRNP DL-B</shortName>
    </recommendedName>
</protein>
<proteinExistence type="evidence at transcript level"/>
<evidence type="ECO:0000250" key="1"/>
<evidence type="ECO:0000250" key="2">
    <source>
        <dbReference type="UniProtKB" id="O14979"/>
    </source>
</evidence>
<evidence type="ECO:0000255" key="3">
    <source>
        <dbReference type="PROSITE-ProRule" id="PRU00176"/>
    </source>
</evidence>
<evidence type="ECO:0000256" key="4">
    <source>
        <dbReference type="SAM" id="MobiDB-lite"/>
    </source>
</evidence>
<dbReference type="EMBL" id="BC068788">
    <property type="protein sequence ID" value="AAH68788.1"/>
    <property type="molecule type" value="mRNA"/>
</dbReference>
<dbReference type="RefSeq" id="NP_001084608.1">
    <property type="nucleotide sequence ID" value="NM_001091139.1"/>
</dbReference>
<dbReference type="SMR" id="Q6NU14"/>
<dbReference type="DNASU" id="414562"/>
<dbReference type="GeneID" id="414562"/>
<dbReference type="KEGG" id="xla:414562"/>
<dbReference type="AGR" id="Xenbase:XB-GENE-6252556"/>
<dbReference type="CTD" id="414562"/>
<dbReference type="Xenbase" id="XB-GENE-6252556">
    <property type="gene designation" value="hnrnpdl.S"/>
</dbReference>
<dbReference type="OrthoDB" id="1875751at2759"/>
<dbReference type="Proteomes" id="UP000186698">
    <property type="component" value="Chromosome 1S"/>
</dbReference>
<dbReference type="Bgee" id="414562">
    <property type="expression patterns" value="Expressed in gastrula and 19 other cell types or tissues"/>
</dbReference>
<dbReference type="GO" id="GO:0000785">
    <property type="term" value="C:chromatin"/>
    <property type="evidence" value="ECO:0000318"/>
    <property type="project" value="GO_Central"/>
</dbReference>
<dbReference type="GO" id="GO:0005737">
    <property type="term" value="C:cytoplasm"/>
    <property type="evidence" value="ECO:0007669"/>
    <property type="project" value="UniProtKB-SubCell"/>
</dbReference>
<dbReference type="GO" id="GO:0005654">
    <property type="term" value="C:nucleoplasm"/>
    <property type="evidence" value="ECO:0000318"/>
    <property type="project" value="GO_Central"/>
</dbReference>
<dbReference type="GO" id="GO:0003677">
    <property type="term" value="F:DNA binding"/>
    <property type="evidence" value="ECO:0007669"/>
    <property type="project" value="UniProtKB-KW"/>
</dbReference>
<dbReference type="GO" id="GO:0008143">
    <property type="term" value="F:poly(A) binding"/>
    <property type="evidence" value="ECO:0007669"/>
    <property type="project" value="TreeGrafter"/>
</dbReference>
<dbReference type="GO" id="GO:0034046">
    <property type="term" value="F:poly(G) binding"/>
    <property type="evidence" value="ECO:0007669"/>
    <property type="project" value="TreeGrafter"/>
</dbReference>
<dbReference type="GO" id="GO:0003723">
    <property type="term" value="F:RNA binding"/>
    <property type="evidence" value="ECO:0000318"/>
    <property type="project" value="GO_Central"/>
</dbReference>
<dbReference type="GO" id="GO:0010468">
    <property type="term" value="P:regulation of gene expression"/>
    <property type="evidence" value="ECO:0000318"/>
    <property type="project" value="GO_Central"/>
</dbReference>
<dbReference type="CDD" id="cd12758">
    <property type="entry name" value="RRM1_hnRPDL"/>
    <property type="match status" value="1"/>
</dbReference>
<dbReference type="CDD" id="cd12585">
    <property type="entry name" value="RRM2_hnRPDL"/>
    <property type="match status" value="1"/>
</dbReference>
<dbReference type="FunFam" id="3.30.70.330:FF:000220">
    <property type="entry name" value="Heterogeneous nuclear ribonucleoprotein D-like protein"/>
    <property type="match status" value="1"/>
</dbReference>
<dbReference type="FunFam" id="3.30.70.330:FF:000030">
    <property type="entry name" value="Heterogeneous nuclear ribonucleoprotein d0 isoform"/>
    <property type="match status" value="1"/>
</dbReference>
<dbReference type="Gene3D" id="3.30.70.330">
    <property type="match status" value="2"/>
</dbReference>
<dbReference type="InterPro" id="IPR034847">
    <property type="entry name" value="hnRPDL_RRM1"/>
</dbReference>
<dbReference type="InterPro" id="IPR012677">
    <property type="entry name" value="Nucleotide-bd_a/b_plait_sf"/>
</dbReference>
<dbReference type="InterPro" id="IPR035979">
    <property type="entry name" value="RBD_domain_sf"/>
</dbReference>
<dbReference type="InterPro" id="IPR000504">
    <property type="entry name" value="RRM_dom"/>
</dbReference>
<dbReference type="PANTHER" id="PTHR48033:SF2">
    <property type="entry name" value="HETEROGENEOUS NUCLEAR RIBONUCLEOPROTEIN D-LIKE"/>
    <property type="match status" value="1"/>
</dbReference>
<dbReference type="PANTHER" id="PTHR48033">
    <property type="entry name" value="RNA-BINDING (RRM/RBD/RNP MOTIFS) FAMILY PROTEIN"/>
    <property type="match status" value="1"/>
</dbReference>
<dbReference type="Pfam" id="PF00076">
    <property type="entry name" value="RRM_1"/>
    <property type="match status" value="2"/>
</dbReference>
<dbReference type="SMART" id="SM00360">
    <property type="entry name" value="RRM"/>
    <property type="match status" value="2"/>
</dbReference>
<dbReference type="SUPFAM" id="SSF54928">
    <property type="entry name" value="RNA-binding domain, RBD"/>
    <property type="match status" value="2"/>
</dbReference>
<dbReference type="PROSITE" id="PS50102">
    <property type="entry name" value="RRM"/>
    <property type="match status" value="2"/>
</dbReference>
<keyword id="KW-0963">Cytoplasm</keyword>
<keyword id="KW-0238">DNA-binding</keyword>
<keyword id="KW-0488">Methylation</keyword>
<keyword id="KW-0539">Nucleus</keyword>
<keyword id="KW-1185">Reference proteome</keyword>
<keyword id="KW-0677">Repeat</keyword>
<keyword id="KW-0694">RNA-binding</keyword>
<keyword id="KW-0804">Transcription</keyword>
<keyword id="KW-0805">Transcription regulation</keyword>
<reference key="1">
    <citation type="submission" date="2004-04" db="EMBL/GenBank/DDBJ databases">
        <authorList>
            <consortium name="NIH - Xenopus Gene Collection (XGC) project"/>
        </authorList>
    </citation>
    <scope>NUCLEOTIDE SEQUENCE [LARGE SCALE MRNA]</scope>
    <source>
        <tissue>Embryo</tissue>
    </source>
</reference>